<gene>
    <name evidence="9" type="primary">ceh-2</name>
    <name evidence="9" type="ORF">C27A12.5</name>
</gene>
<name>HM02_CAEEL</name>
<dbReference type="EMBL" id="AY246428">
    <property type="protein sequence ID" value="AAO91835.1"/>
    <property type="molecule type" value="mRNA"/>
</dbReference>
<dbReference type="EMBL" id="AY246429">
    <property type="protein sequence ID" value="AAO91836.1"/>
    <property type="molecule type" value="mRNA"/>
</dbReference>
<dbReference type="EMBL" id="FO080101">
    <property type="protein sequence ID" value="CCD61202.1"/>
    <property type="molecule type" value="Genomic_DNA"/>
</dbReference>
<dbReference type="PIR" id="E87793">
    <property type="entry name" value="E87793"/>
</dbReference>
<dbReference type="PIR" id="S05703">
    <property type="entry name" value="S05703"/>
</dbReference>
<dbReference type="RefSeq" id="NP_491746.1">
    <property type="nucleotide sequence ID" value="NM_059345.7"/>
</dbReference>
<dbReference type="SMR" id="G5ECT8"/>
<dbReference type="BioGRID" id="56117">
    <property type="interactions" value="2"/>
</dbReference>
<dbReference type="FunCoup" id="G5ECT8">
    <property type="interactions" value="136"/>
</dbReference>
<dbReference type="IntAct" id="G5ECT8">
    <property type="interactions" value="2"/>
</dbReference>
<dbReference type="STRING" id="6239.C27A12.5.1"/>
<dbReference type="PaxDb" id="6239-C27A12.5"/>
<dbReference type="PeptideAtlas" id="G5ECT8"/>
<dbReference type="EnsemblMetazoa" id="C27A12.5.1">
    <property type="protein sequence ID" value="C27A12.5.1"/>
    <property type="gene ID" value="WBGene00000429"/>
</dbReference>
<dbReference type="GeneID" id="191615"/>
<dbReference type="KEGG" id="cel:CELE_C27A12.5"/>
<dbReference type="AGR" id="WB:WBGene00000429"/>
<dbReference type="CTD" id="191615"/>
<dbReference type="WormBase" id="C27A12.5">
    <property type="protein sequence ID" value="CE20530"/>
    <property type="gene ID" value="WBGene00000429"/>
    <property type="gene designation" value="ceh-2"/>
</dbReference>
<dbReference type="eggNOG" id="KOG0843">
    <property type="taxonomic scope" value="Eukaryota"/>
</dbReference>
<dbReference type="GeneTree" id="ENSGT00940000169446"/>
<dbReference type="HOGENOM" id="CLU_1327426_0_0_1"/>
<dbReference type="InParanoid" id="G5ECT8"/>
<dbReference type="OMA" id="HVQMACS"/>
<dbReference type="OrthoDB" id="6159439at2759"/>
<dbReference type="PhylomeDB" id="G5ECT8"/>
<dbReference type="PRO" id="PR:G5ECT8"/>
<dbReference type="Proteomes" id="UP000001940">
    <property type="component" value="Chromosome I"/>
</dbReference>
<dbReference type="Bgee" id="WBGene00000429">
    <property type="expression patterns" value="Expressed in pharyngeal muscle cell (C elegans) and 3 other cell types or tissues"/>
</dbReference>
<dbReference type="GO" id="GO:0005634">
    <property type="term" value="C:nucleus"/>
    <property type="evidence" value="ECO:0000314"/>
    <property type="project" value="WormBase"/>
</dbReference>
<dbReference type="GO" id="GO:0000981">
    <property type="term" value="F:DNA-binding transcription factor activity, RNA polymerase II-specific"/>
    <property type="evidence" value="ECO:0000318"/>
    <property type="project" value="GO_Central"/>
</dbReference>
<dbReference type="GO" id="GO:0000978">
    <property type="term" value="F:RNA polymerase II cis-regulatory region sequence-specific DNA binding"/>
    <property type="evidence" value="ECO:0000318"/>
    <property type="project" value="GO_Central"/>
</dbReference>
<dbReference type="GO" id="GO:0007420">
    <property type="term" value="P:brain development"/>
    <property type="evidence" value="ECO:0000318"/>
    <property type="project" value="GO_Central"/>
</dbReference>
<dbReference type="GO" id="GO:0007417">
    <property type="term" value="P:central nervous system development"/>
    <property type="evidence" value="ECO:0000318"/>
    <property type="project" value="GO_Central"/>
</dbReference>
<dbReference type="GO" id="GO:0030182">
    <property type="term" value="P:neuron differentiation"/>
    <property type="evidence" value="ECO:0000318"/>
    <property type="project" value="GO_Central"/>
</dbReference>
<dbReference type="GO" id="GO:0006357">
    <property type="term" value="P:regulation of transcription by RNA polymerase II"/>
    <property type="evidence" value="ECO:0000318"/>
    <property type="project" value="GO_Central"/>
</dbReference>
<dbReference type="CDD" id="cd00086">
    <property type="entry name" value="homeodomain"/>
    <property type="match status" value="1"/>
</dbReference>
<dbReference type="FunFam" id="1.10.10.60:FF:000081">
    <property type="entry name" value="Empty spiracles homeobox 2"/>
    <property type="match status" value="1"/>
</dbReference>
<dbReference type="Gene3D" id="1.10.10.60">
    <property type="entry name" value="Homeodomain-like"/>
    <property type="match status" value="1"/>
</dbReference>
<dbReference type="InterPro" id="IPR050877">
    <property type="entry name" value="EMX-VAX-Noto_Homeobox_TFs"/>
</dbReference>
<dbReference type="InterPro" id="IPR001356">
    <property type="entry name" value="HD"/>
</dbReference>
<dbReference type="InterPro" id="IPR020479">
    <property type="entry name" value="HD_metazoa"/>
</dbReference>
<dbReference type="InterPro" id="IPR017970">
    <property type="entry name" value="Homeobox_CS"/>
</dbReference>
<dbReference type="InterPro" id="IPR009057">
    <property type="entry name" value="Homeodomain-like_sf"/>
</dbReference>
<dbReference type="InterPro" id="IPR000047">
    <property type="entry name" value="HTH_motif"/>
</dbReference>
<dbReference type="PANTHER" id="PTHR24339:SF28">
    <property type="entry name" value="E5-RELATED"/>
    <property type="match status" value="1"/>
</dbReference>
<dbReference type="PANTHER" id="PTHR24339">
    <property type="entry name" value="HOMEOBOX PROTEIN EMX-RELATED"/>
    <property type="match status" value="1"/>
</dbReference>
<dbReference type="Pfam" id="PF00046">
    <property type="entry name" value="Homeodomain"/>
    <property type="match status" value="1"/>
</dbReference>
<dbReference type="PRINTS" id="PR00024">
    <property type="entry name" value="HOMEOBOX"/>
</dbReference>
<dbReference type="PRINTS" id="PR00031">
    <property type="entry name" value="HTHREPRESSR"/>
</dbReference>
<dbReference type="SMART" id="SM00389">
    <property type="entry name" value="HOX"/>
    <property type="match status" value="1"/>
</dbReference>
<dbReference type="SUPFAM" id="SSF46689">
    <property type="entry name" value="Homeodomain-like"/>
    <property type="match status" value="1"/>
</dbReference>
<dbReference type="PROSITE" id="PS00027">
    <property type="entry name" value="HOMEOBOX_1"/>
    <property type="match status" value="1"/>
</dbReference>
<dbReference type="PROSITE" id="PS50071">
    <property type="entry name" value="HOMEOBOX_2"/>
    <property type="match status" value="1"/>
</dbReference>
<comment type="function">
    <text evidence="5">Required for activity of the M3 pharyngeal motor neuron.</text>
</comment>
<comment type="subcellular location">
    <subcellularLocation>
        <location evidence="3 5">Nucleus</location>
    </subcellularLocation>
</comment>
<comment type="tissue specificity">
    <text evidence="5">In the anterior pharynx, expressed in the I3 interneuron, the NSM and M3 motor neuron pairs, the three m2 muscle cells and the three e2 epithelial cells (at protein level).</text>
</comment>
<comment type="developmental stage">
    <text evidence="5">Earliest expression is detected in late gastrulation (at protein level). Expression is strongest in elongated embryos and early larvae.</text>
</comment>
<comment type="disruption phenotype">
    <text evidence="5">Mutants lacking the homeobox domain are viable and fertile but proliferate slightly more slowly than wild-type due to retarded larval development and reduced brood size. About 20% appear starved as they are shorter, thinner and paler at all stages with severely affected adults bearing only a few eggs. M3 neuron activity is decreased.</text>
</comment>
<comment type="miscellaneous">
    <text evidence="5">Can substitute for ems in D.melanogaster ems mutants, partially rescuing the mutant phenotype.</text>
</comment>
<comment type="similarity">
    <text evidence="1">Belongs to the EMX homeobox family.</text>
</comment>
<reference evidence="7" key="1">
    <citation type="journal article" date="2003" name="Development">
        <title>The Caenorhabditis elegans ems class homeobox gene ceh-2 is required for M3 pharynx motoneuron function.</title>
        <authorList>
            <person name="Aspock G."/>
            <person name="Ruvkun G."/>
            <person name="Burglin T.R."/>
        </authorList>
    </citation>
    <scope>NUCLEOTIDE SEQUENCE [MRNA]</scope>
    <scope>FUNCTION</scope>
    <scope>SUBCELLULAR LOCATION</scope>
    <scope>TISSUE SPECIFICITY</scope>
    <scope>DEVELOPMENTAL STAGE</scope>
    <scope>DISRUPTION PHENOTYPE</scope>
    <source>
        <tissue evidence="6">Embryo</tissue>
    </source>
</reference>
<reference evidence="8" key="2">
    <citation type="journal article" date="1998" name="Science">
        <title>Genome sequence of the nematode C. elegans: a platform for investigating biology.</title>
        <authorList>
            <consortium name="The C. elegans sequencing consortium"/>
        </authorList>
    </citation>
    <scope>NUCLEOTIDE SEQUENCE [LARGE SCALE GENOMIC DNA]</scope>
    <source>
        <strain evidence="8">Bristol N2</strain>
    </source>
</reference>
<organism evidence="8">
    <name type="scientific">Caenorhabditis elegans</name>
    <dbReference type="NCBI Taxonomy" id="6239"/>
    <lineage>
        <taxon>Eukaryota</taxon>
        <taxon>Metazoa</taxon>
        <taxon>Ecdysozoa</taxon>
        <taxon>Nematoda</taxon>
        <taxon>Chromadorea</taxon>
        <taxon>Rhabditida</taxon>
        <taxon>Rhabditina</taxon>
        <taxon>Rhabditomorpha</taxon>
        <taxon>Rhabditoidea</taxon>
        <taxon>Rhabditidae</taxon>
        <taxon>Peloderinae</taxon>
        <taxon>Caenorhabditis</taxon>
    </lineage>
</organism>
<accession>G5ECT8</accession>
<protein>
    <recommendedName>
        <fullName evidence="9">Homeobox protein ceh-2</fullName>
    </recommendedName>
</protein>
<proteinExistence type="evidence at protein level"/>
<keyword id="KW-0238">DNA-binding</keyword>
<keyword id="KW-0371">Homeobox</keyword>
<keyword id="KW-0539">Nucleus</keyword>
<keyword id="KW-1185">Reference proteome</keyword>
<sequence length="209" mass="23414">MTLKFSVERLVDSEKESEEADVEEQNNLKKLEEDEEDDELCEKSGKNEPLSQTLSYFDVLLPHVQMACSNPFISGIGASGSGDQNLNTGAGGSVWQHPWLELLQSTTAAQFGDVTAGLFLQPLRKNKRIRTAFSASQLIQLEKAFEGNHYVVGNERKQLAAKLSLTETQVKVWFQNRRTKHKRVRLEGSDPNAPMSNDEDDEDDKKSVS</sequence>
<feature type="chain" id="PRO_0000430930" description="Homeobox protein ceh-2">
    <location>
        <begin position="1"/>
        <end position="209"/>
    </location>
</feature>
<feature type="DNA-binding region" description="Homeobox" evidence="2">
    <location>
        <begin position="126"/>
        <end position="185"/>
    </location>
</feature>
<feature type="region of interest" description="Disordered" evidence="4">
    <location>
        <begin position="1"/>
        <end position="46"/>
    </location>
</feature>
<feature type="region of interest" description="Disordered" evidence="4">
    <location>
        <begin position="181"/>
        <end position="209"/>
    </location>
</feature>
<feature type="compositionally biased region" description="Basic and acidic residues" evidence="4">
    <location>
        <begin position="1"/>
        <end position="14"/>
    </location>
</feature>
<feature type="compositionally biased region" description="Acidic residues" evidence="4">
    <location>
        <begin position="15"/>
        <end position="24"/>
    </location>
</feature>
<evidence type="ECO:0000255" key="1"/>
<evidence type="ECO:0000255" key="2">
    <source>
        <dbReference type="PROSITE-ProRule" id="PRU00108"/>
    </source>
</evidence>
<evidence type="ECO:0000255" key="3">
    <source>
        <dbReference type="RuleBase" id="RU000682"/>
    </source>
</evidence>
<evidence type="ECO:0000256" key="4">
    <source>
        <dbReference type="SAM" id="MobiDB-lite"/>
    </source>
</evidence>
<evidence type="ECO:0000269" key="5">
    <source>
    </source>
</evidence>
<evidence type="ECO:0000303" key="6">
    <source>
    </source>
</evidence>
<evidence type="ECO:0000312" key="7">
    <source>
        <dbReference type="EMBL" id="AAO91835.1"/>
    </source>
</evidence>
<evidence type="ECO:0000312" key="8">
    <source>
        <dbReference type="Proteomes" id="UP000001940"/>
    </source>
</evidence>
<evidence type="ECO:0000312" key="9">
    <source>
        <dbReference type="WormBase" id="C27A12.5"/>
    </source>
</evidence>